<dbReference type="EMBL" id="CP000942">
    <property type="protein sequence ID" value="ACA32694.1"/>
    <property type="molecule type" value="Genomic_DNA"/>
</dbReference>
<dbReference type="RefSeq" id="WP_006688613.1">
    <property type="nucleotide sequence ID" value="NC_010503.1"/>
</dbReference>
<dbReference type="SMR" id="B1AJ69"/>
<dbReference type="GeneID" id="29672331"/>
<dbReference type="KEGG" id="upa:UPA3_0447"/>
<dbReference type="HOGENOM" id="CLU_056339_5_0_14"/>
<dbReference type="Proteomes" id="UP000002162">
    <property type="component" value="Chromosome"/>
</dbReference>
<dbReference type="GO" id="GO:0005737">
    <property type="term" value="C:cytoplasm"/>
    <property type="evidence" value="ECO:0007669"/>
    <property type="project" value="UniProtKB-SubCell"/>
</dbReference>
<dbReference type="GO" id="GO:0016151">
    <property type="term" value="F:nickel cation binding"/>
    <property type="evidence" value="ECO:0007669"/>
    <property type="project" value="UniProtKB-UniRule"/>
</dbReference>
<dbReference type="HAMAP" id="MF_01384">
    <property type="entry name" value="UreD"/>
    <property type="match status" value="1"/>
</dbReference>
<dbReference type="InterPro" id="IPR002669">
    <property type="entry name" value="UreD"/>
</dbReference>
<dbReference type="PANTHER" id="PTHR33643">
    <property type="entry name" value="UREASE ACCESSORY PROTEIN D"/>
    <property type="match status" value="1"/>
</dbReference>
<dbReference type="PANTHER" id="PTHR33643:SF1">
    <property type="entry name" value="UREASE ACCESSORY PROTEIN D"/>
    <property type="match status" value="1"/>
</dbReference>
<dbReference type="Pfam" id="PF01774">
    <property type="entry name" value="UreD"/>
    <property type="match status" value="1"/>
</dbReference>
<feature type="chain" id="PRO_1000215124" description="Urease accessory protein UreD">
    <location>
        <begin position="1"/>
        <end position="287"/>
    </location>
</feature>
<accession>B1AJ69</accession>
<evidence type="ECO:0000255" key="1">
    <source>
        <dbReference type="HAMAP-Rule" id="MF_01384"/>
    </source>
</evidence>
<sequence length="287" mass="33247">MILNKEKIKNYAAYLYIKVAYDQAHSKMAHTVYFTNFYRSSKPLFLDEEDPINPCFQTISMGGGYVSGEIYRSDFEINDDARCIITTQSSAKAYKTVDGKTSEQHTNITLGKNSILEYISDNVIVYEDGKFAQFNNFKMDSSATLIYTECFGPGWSPHGSAYQYEKMYLNTKIYYDDKLVLFDNLKFQPRKNDESAFGIMDGYHYCGTMIVINQQVIEDDVIKIRDLVKEKYPDMDMIFGVSRMDIPGLGLRVLANTYYHVEKINAVAHDYFRRKLFNKKPLILRKP</sequence>
<comment type="function">
    <text evidence="1">Required for maturation of urease via the functional incorporation of the urease nickel metallocenter.</text>
</comment>
<comment type="subunit">
    <text evidence="1">UreD, UreF and UreG form a complex that acts as a GTP-hydrolysis-dependent molecular chaperone, activating the urease apoprotein by helping to assemble the nickel containing metallocenter of UreC. The UreE protein probably delivers the nickel.</text>
</comment>
<comment type="subcellular location">
    <subcellularLocation>
        <location evidence="1">Cytoplasm</location>
    </subcellularLocation>
</comment>
<comment type="similarity">
    <text evidence="1">Belongs to the UreD family.</text>
</comment>
<organism>
    <name type="scientific">Ureaplasma parvum serovar 3 (strain ATCC 27815 / 27 / NCTC 11736)</name>
    <dbReference type="NCBI Taxonomy" id="505682"/>
    <lineage>
        <taxon>Bacteria</taxon>
        <taxon>Bacillati</taxon>
        <taxon>Mycoplasmatota</taxon>
        <taxon>Mycoplasmoidales</taxon>
        <taxon>Mycoplasmoidaceae</taxon>
        <taxon>Ureaplasma</taxon>
    </lineage>
</organism>
<protein>
    <recommendedName>
        <fullName evidence="1">Urease accessory protein UreD</fullName>
    </recommendedName>
</protein>
<keyword id="KW-0143">Chaperone</keyword>
<keyword id="KW-0963">Cytoplasm</keyword>
<keyword id="KW-0996">Nickel insertion</keyword>
<proteinExistence type="inferred from homology"/>
<name>URED_UREP2</name>
<gene>
    <name evidence="1" type="primary">ureD</name>
    <name type="ordered locus">UPA3_0447</name>
</gene>
<reference key="1">
    <citation type="submission" date="2008-02" db="EMBL/GenBank/DDBJ databases">
        <title>Genome sequence of Ureaplasma parvum serovar 3.</title>
        <authorList>
            <person name="Methe B.A."/>
            <person name="Glass J."/>
            <person name="Waites K."/>
            <person name="Shrivastava S."/>
        </authorList>
    </citation>
    <scope>NUCLEOTIDE SEQUENCE [LARGE SCALE GENOMIC DNA]</scope>
    <source>
        <strain>ATCC 27815 / 27 / NCTC 11736</strain>
    </source>
</reference>